<proteinExistence type="inferred from homology"/>
<comment type="function">
    <text evidence="1">Could be a nuclease involved in processing of the 5'-end of pre-16S rRNA.</text>
</comment>
<comment type="subcellular location">
    <subcellularLocation>
        <location evidence="1">Cytoplasm</location>
    </subcellularLocation>
</comment>
<comment type="similarity">
    <text evidence="1">Belongs to the YqgF nuclease family.</text>
</comment>
<protein>
    <recommendedName>
        <fullName evidence="1">Putative pre-16S rRNA nuclease</fullName>
        <ecNumber evidence="1">3.1.-.-</ecNumber>
    </recommendedName>
</protein>
<reference key="1">
    <citation type="journal article" date="2006" name="Proc. Natl. Acad. Sci. U.S.A.">
        <title>Molecular genetic anatomy of inter- and intraserotype variation in the human bacterial pathogen group A Streptococcus.</title>
        <authorList>
            <person name="Beres S.B."/>
            <person name="Richter E.W."/>
            <person name="Nagiec M.J."/>
            <person name="Sumby P."/>
            <person name="Porcella S.F."/>
            <person name="DeLeo F.R."/>
            <person name="Musser J.M."/>
        </authorList>
    </citation>
    <scope>NUCLEOTIDE SEQUENCE [LARGE SCALE GENOMIC DNA]</scope>
    <source>
        <strain>MGAS2096</strain>
    </source>
</reference>
<gene>
    <name type="ordered locus">MGAS2096_Spy1829</name>
</gene>
<name>YQGF_STRPB</name>
<evidence type="ECO:0000255" key="1">
    <source>
        <dbReference type="HAMAP-Rule" id="MF_00651"/>
    </source>
</evidence>
<accession>Q1J9D0</accession>
<sequence length="139" mass="15760">MRIMGLDVGSKTVGVAISDPLGFTAQGLEIIKIDEEKAEFGFTRLEELVKQYQVEQFVIGLPKNMNNTNGPRVDASITYGNHIEHLFGLPVHYQDERLTTVEAERMLIEQADISRGKRKKVIDKLAAQLILQNYLNRNF</sequence>
<keyword id="KW-0963">Cytoplasm</keyword>
<keyword id="KW-0378">Hydrolase</keyword>
<keyword id="KW-0540">Nuclease</keyword>
<keyword id="KW-0690">Ribosome biogenesis</keyword>
<organism>
    <name type="scientific">Streptococcus pyogenes serotype M12 (strain MGAS2096)</name>
    <dbReference type="NCBI Taxonomy" id="370553"/>
    <lineage>
        <taxon>Bacteria</taxon>
        <taxon>Bacillati</taxon>
        <taxon>Bacillota</taxon>
        <taxon>Bacilli</taxon>
        <taxon>Lactobacillales</taxon>
        <taxon>Streptococcaceae</taxon>
        <taxon>Streptococcus</taxon>
    </lineage>
</organism>
<feature type="chain" id="PRO_0000257600" description="Putative pre-16S rRNA nuclease">
    <location>
        <begin position="1"/>
        <end position="139"/>
    </location>
</feature>
<dbReference type="EC" id="3.1.-.-" evidence="1"/>
<dbReference type="EMBL" id="CP000261">
    <property type="protein sequence ID" value="ABF36881.1"/>
    <property type="molecule type" value="Genomic_DNA"/>
</dbReference>
<dbReference type="SMR" id="Q1J9D0"/>
<dbReference type="KEGG" id="spj:MGAS2096_Spy1829"/>
<dbReference type="HOGENOM" id="CLU_098240_2_0_9"/>
<dbReference type="GO" id="GO:0005829">
    <property type="term" value="C:cytosol"/>
    <property type="evidence" value="ECO:0007669"/>
    <property type="project" value="TreeGrafter"/>
</dbReference>
<dbReference type="GO" id="GO:0004518">
    <property type="term" value="F:nuclease activity"/>
    <property type="evidence" value="ECO:0007669"/>
    <property type="project" value="UniProtKB-KW"/>
</dbReference>
<dbReference type="GO" id="GO:0000967">
    <property type="term" value="P:rRNA 5'-end processing"/>
    <property type="evidence" value="ECO:0007669"/>
    <property type="project" value="UniProtKB-UniRule"/>
</dbReference>
<dbReference type="CDD" id="cd16964">
    <property type="entry name" value="YqgF"/>
    <property type="match status" value="1"/>
</dbReference>
<dbReference type="FunFam" id="3.30.420.140:FF:000003">
    <property type="entry name" value="Putative pre-16S rRNA nuclease"/>
    <property type="match status" value="1"/>
</dbReference>
<dbReference type="Gene3D" id="3.30.420.140">
    <property type="entry name" value="YqgF/RNase H-like domain"/>
    <property type="match status" value="1"/>
</dbReference>
<dbReference type="HAMAP" id="MF_00651">
    <property type="entry name" value="Nuclease_YqgF"/>
    <property type="match status" value="1"/>
</dbReference>
<dbReference type="InterPro" id="IPR012337">
    <property type="entry name" value="RNaseH-like_sf"/>
</dbReference>
<dbReference type="InterPro" id="IPR005227">
    <property type="entry name" value="YqgF"/>
</dbReference>
<dbReference type="InterPro" id="IPR006641">
    <property type="entry name" value="YqgF/RNaseH-like_dom"/>
</dbReference>
<dbReference type="InterPro" id="IPR037027">
    <property type="entry name" value="YqgF/RNaseH-like_dom_sf"/>
</dbReference>
<dbReference type="NCBIfam" id="TIGR00250">
    <property type="entry name" value="RNAse_H_YqgF"/>
    <property type="match status" value="1"/>
</dbReference>
<dbReference type="PANTHER" id="PTHR33317">
    <property type="entry name" value="POLYNUCLEOTIDYL TRANSFERASE, RIBONUCLEASE H-LIKE SUPERFAMILY PROTEIN"/>
    <property type="match status" value="1"/>
</dbReference>
<dbReference type="PANTHER" id="PTHR33317:SF4">
    <property type="entry name" value="POLYNUCLEOTIDYL TRANSFERASE, RIBONUCLEASE H-LIKE SUPERFAMILY PROTEIN"/>
    <property type="match status" value="1"/>
</dbReference>
<dbReference type="Pfam" id="PF03652">
    <property type="entry name" value="RuvX"/>
    <property type="match status" value="1"/>
</dbReference>
<dbReference type="SMART" id="SM00732">
    <property type="entry name" value="YqgFc"/>
    <property type="match status" value="1"/>
</dbReference>
<dbReference type="SUPFAM" id="SSF53098">
    <property type="entry name" value="Ribonuclease H-like"/>
    <property type="match status" value="1"/>
</dbReference>